<gene>
    <name evidence="1" type="primary">rpsT</name>
    <name type="ordered locus">BURPS1710b_1075</name>
</gene>
<keyword id="KW-0687">Ribonucleoprotein</keyword>
<keyword id="KW-0689">Ribosomal protein</keyword>
<keyword id="KW-0694">RNA-binding</keyword>
<keyword id="KW-0699">rRNA-binding</keyword>
<sequence length="92" mass="9847">MANSAQARKRARQAAKANSHNSALRSKFRTAIKAVRKAIDAGDQAKAAELFKAATKTIDTIADKKIVHKNKAARHKSRLSAAVKGLQAQAAQ</sequence>
<accession>Q3JVB6</accession>
<organism>
    <name type="scientific">Burkholderia pseudomallei (strain 1710b)</name>
    <dbReference type="NCBI Taxonomy" id="320372"/>
    <lineage>
        <taxon>Bacteria</taxon>
        <taxon>Pseudomonadati</taxon>
        <taxon>Pseudomonadota</taxon>
        <taxon>Betaproteobacteria</taxon>
        <taxon>Burkholderiales</taxon>
        <taxon>Burkholderiaceae</taxon>
        <taxon>Burkholderia</taxon>
        <taxon>pseudomallei group</taxon>
    </lineage>
</organism>
<proteinExistence type="inferred from homology"/>
<feature type="chain" id="PRO_0000236427" description="Small ribosomal subunit protein bS20">
    <location>
        <begin position="1"/>
        <end position="92"/>
    </location>
</feature>
<feature type="region of interest" description="Disordered" evidence="2">
    <location>
        <begin position="1"/>
        <end position="25"/>
    </location>
</feature>
<evidence type="ECO:0000255" key="1">
    <source>
        <dbReference type="HAMAP-Rule" id="MF_00500"/>
    </source>
</evidence>
<evidence type="ECO:0000256" key="2">
    <source>
        <dbReference type="SAM" id="MobiDB-lite"/>
    </source>
</evidence>
<evidence type="ECO:0000305" key="3"/>
<reference key="1">
    <citation type="journal article" date="2010" name="Genome Biol. Evol.">
        <title>Continuing evolution of Burkholderia mallei through genome reduction and large-scale rearrangements.</title>
        <authorList>
            <person name="Losada L."/>
            <person name="Ronning C.M."/>
            <person name="DeShazer D."/>
            <person name="Woods D."/>
            <person name="Fedorova N."/>
            <person name="Kim H.S."/>
            <person name="Shabalina S.A."/>
            <person name="Pearson T.R."/>
            <person name="Brinkac L."/>
            <person name="Tan P."/>
            <person name="Nandi T."/>
            <person name="Crabtree J."/>
            <person name="Badger J."/>
            <person name="Beckstrom-Sternberg S."/>
            <person name="Saqib M."/>
            <person name="Schutzer S.E."/>
            <person name="Keim P."/>
            <person name="Nierman W.C."/>
        </authorList>
    </citation>
    <scope>NUCLEOTIDE SEQUENCE [LARGE SCALE GENOMIC DNA]</scope>
    <source>
        <strain>1710b</strain>
    </source>
</reference>
<comment type="function">
    <text evidence="1">Binds directly to 16S ribosomal RNA.</text>
</comment>
<comment type="similarity">
    <text evidence="1">Belongs to the bacterial ribosomal protein bS20 family.</text>
</comment>
<name>RS20_BURP1</name>
<protein>
    <recommendedName>
        <fullName evidence="1">Small ribosomal subunit protein bS20</fullName>
    </recommendedName>
    <alternativeName>
        <fullName evidence="3">30S ribosomal protein S20</fullName>
    </alternativeName>
</protein>
<dbReference type="EMBL" id="CP000124">
    <property type="protein sequence ID" value="ABA48172.1"/>
    <property type="molecule type" value="Genomic_DNA"/>
</dbReference>
<dbReference type="RefSeq" id="WP_004189743.1">
    <property type="nucleotide sequence ID" value="NC_007434.1"/>
</dbReference>
<dbReference type="SMR" id="Q3JVB6"/>
<dbReference type="EnsemblBacteria" id="ABA48172">
    <property type="protein sequence ID" value="ABA48172"/>
    <property type="gene ID" value="BURPS1710b_1075"/>
</dbReference>
<dbReference type="GeneID" id="93059378"/>
<dbReference type="KEGG" id="bpm:BURPS1710b_1075"/>
<dbReference type="HOGENOM" id="CLU_160655_4_0_4"/>
<dbReference type="Proteomes" id="UP000002700">
    <property type="component" value="Chromosome I"/>
</dbReference>
<dbReference type="GO" id="GO:0005829">
    <property type="term" value="C:cytosol"/>
    <property type="evidence" value="ECO:0007669"/>
    <property type="project" value="TreeGrafter"/>
</dbReference>
<dbReference type="GO" id="GO:0015935">
    <property type="term" value="C:small ribosomal subunit"/>
    <property type="evidence" value="ECO:0007669"/>
    <property type="project" value="TreeGrafter"/>
</dbReference>
<dbReference type="GO" id="GO:0070181">
    <property type="term" value="F:small ribosomal subunit rRNA binding"/>
    <property type="evidence" value="ECO:0007669"/>
    <property type="project" value="TreeGrafter"/>
</dbReference>
<dbReference type="GO" id="GO:0003735">
    <property type="term" value="F:structural constituent of ribosome"/>
    <property type="evidence" value="ECO:0007669"/>
    <property type="project" value="InterPro"/>
</dbReference>
<dbReference type="GO" id="GO:0006412">
    <property type="term" value="P:translation"/>
    <property type="evidence" value="ECO:0007669"/>
    <property type="project" value="UniProtKB-UniRule"/>
</dbReference>
<dbReference type="FunFam" id="1.20.58.110:FF:000001">
    <property type="entry name" value="30S ribosomal protein S20"/>
    <property type="match status" value="1"/>
</dbReference>
<dbReference type="Gene3D" id="1.20.58.110">
    <property type="entry name" value="Ribosomal protein S20"/>
    <property type="match status" value="1"/>
</dbReference>
<dbReference type="HAMAP" id="MF_00500">
    <property type="entry name" value="Ribosomal_bS20"/>
    <property type="match status" value="1"/>
</dbReference>
<dbReference type="InterPro" id="IPR002583">
    <property type="entry name" value="Ribosomal_bS20"/>
</dbReference>
<dbReference type="InterPro" id="IPR036510">
    <property type="entry name" value="Ribosomal_bS20_sf"/>
</dbReference>
<dbReference type="NCBIfam" id="TIGR00029">
    <property type="entry name" value="S20"/>
    <property type="match status" value="1"/>
</dbReference>
<dbReference type="PANTHER" id="PTHR33398">
    <property type="entry name" value="30S RIBOSOMAL PROTEIN S20"/>
    <property type="match status" value="1"/>
</dbReference>
<dbReference type="PANTHER" id="PTHR33398:SF1">
    <property type="entry name" value="SMALL RIBOSOMAL SUBUNIT PROTEIN BS20C"/>
    <property type="match status" value="1"/>
</dbReference>
<dbReference type="Pfam" id="PF01649">
    <property type="entry name" value="Ribosomal_S20p"/>
    <property type="match status" value="1"/>
</dbReference>
<dbReference type="SUPFAM" id="SSF46992">
    <property type="entry name" value="Ribosomal protein S20"/>
    <property type="match status" value="1"/>
</dbReference>